<name>HMGCS_METM7</name>
<reference key="1">
    <citation type="submission" date="2007-06" db="EMBL/GenBank/DDBJ databases">
        <title>Complete sequence of Methanococcus maripaludis C7.</title>
        <authorList>
            <consortium name="US DOE Joint Genome Institute"/>
            <person name="Copeland A."/>
            <person name="Lucas S."/>
            <person name="Lapidus A."/>
            <person name="Barry K."/>
            <person name="Glavina del Rio T."/>
            <person name="Dalin E."/>
            <person name="Tice H."/>
            <person name="Pitluck S."/>
            <person name="Clum A."/>
            <person name="Schmutz J."/>
            <person name="Larimer F."/>
            <person name="Land M."/>
            <person name="Hauser L."/>
            <person name="Kyrpides N."/>
            <person name="Anderson I."/>
            <person name="Sieprawska-Lupa M."/>
            <person name="Whitman W.B."/>
            <person name="Richardson P."/>
        </authorList>
    </citation>
    <scope>NUCLEOTIDE SEQUENCE [LARGE SCALE GENOMIC DNA]</scope>
    <source>
        <strain>C7 / ATCC BAA-1331</strain>
    </source>
</reference>
<feature type="chain" id="PRO_1000068442" description="Hydroxymethylglutaryl-CoA synthase">
    <location>
        <begin position="1"/>
        <end position="349"/>
    </location>
</feature>
<feature type="active site" description="Proton donor/acceptor" evidence="1">
    <location>
        <position position="82"/>
    </location>
</feature>
<feature type="active site" description="Acyl-thioester intermediate" evidence="1">
    <location>
        <position position="114"/>
    </location>
</feature>
<feature type="active site" description="Proton donor/acceptor" evidence="1">
    <location>
        <position position="238"/>
    </location>
</feature>
<feature type="binding site" evidence="1">
    <location>
        <position position="30"/>
    </location>
    <ligand>
        <name>(3S)-3-hydroxy-3-methylglutaryl-CoA</name>
        <dbReference type="ChEBI" id="CHEBI:43074"/>
    </ligand>
</feature>
<feature type="binding site" evidence="1">
    <location>
        <position position="31"/>
    </location>
    <ligand>
        <name>(3S)-3-hydroxy-3-methylglutaryl-CoA</name>
        <dbReference type="ChEBI" id="CHEBI:43074"/>
    </ligand>
</feature>
<feature type="binding site" evidence="1">
    <location>
        <position position="114"/>
    </location>
    <ligand>
        <name>(3S)-3-hydroxy-3-methylglutaryl-CoA</name>
        <dbReference type="ChEBI" id="CHEBI:43074"/>
    </ligand>
</feature>
<feature type="binding site" evidence="1">
    <location>
        <position position="155"/>
    </location>
    <ligand>
        <name>(3S)-3-hydroxy-3-methylglutaryl-CoA</name>
        <dbReference type="ChEBI" id="CHEBI:43074"/>
    </ligand>
</feature>
<feature type="binding site" evidence="1">
    <location>
        <position position="203"/>
    </location>
    <ligand>
        <name>CoA</name>
        <dbReference type="ChEBI" id="CHEBI:57287"/>
        <note>ligand shared with acetoacetyl-CoA thiolase</note>
    </ligand>
</feature>
<feature type="binding site" evidence="1">
    <location>
        <position position="205"/>
    </location>
    <ligand>
        <name>(3S)-3-hydroxy-3-methylglutaryl-CoA</name>
        <dbReference type="ChEBI" id="CHEBI:43074"/>
    </ligand>
</feature>
<feature type="binding site" evidence="1">
    <location>
        <position position="238"/>
    </location>
    <ligand>
        <name>(3S)-3-hydroxy-3-methylglutaryl-CoA</name>
        <dbReference type="ChEBI" id="CHEBI:43074"/>
    </ligand>
</feature>
<feature type="binding site" evidence="1">
    <location>
        <position position="243"/>
    </location>
    <ligand>
        <name>CoA</name>
        <dbReference type="ChEBI" id="CHEBI:57287"/>
        <note>ligand shared with acetoacetyl-CoA thiolase</note>
    </ligand>
</feature>
<feature type="binding site" evidence="1">
    <location>
        <position position="270"/>
    </location>
    <ligand>
        <name>(3S)-3-hydroxy-3-methylglutaryl-CoA</name>
        <dbReference type="ChEBI" id="CHEBI:43074"/>
    </ligand>
</feature>
<feature type="binding site" evidence="1">
    <location>
        <position position="300"/>
    </location>
    <ligand>
        <name>(3S)-3-hydroxy-3-methylglutaryl-CoA</name>
        <dbReference type="ChEBI" id="CHEBI:43074"/>
    </ligand>
</feature>
<keyword id="KW-0012">Acyltransferase</keyword>
<keyword id="KW-0414">Isoprene biosynthesis</keyword>
<keyword id="KW-0808">Transferase</keyword>
<dbReference type="EC" id="2.3.3.10" evidence="1"/>
<dbReference type="EMBL" id="CP000745">
    <property type="protein sequence ID" value="ABR65527.1"/>
    <property type="molecule type" value="Genomic_DNA"/>
</dbReference>
<dbReference type="SMR" id="A6VGF1"/>
<dbReference type="STRING" id="426368.MmarC7_0458"/>
<dbReference type="KEGG" id="mmz:MmarC7_0458"/>
<dbReference type="eggNOG" id="arCOG01767">
    <property type="taxonomic scope" value="Archaea"/>
</dbReference>
<dbReference type="HOGENOM" id="CLU_039592_7_0_2"/>
<dbReference type="OrthoDB" id="5812at2157"/>
<dbReference type="UniPathway" id="UPA00058">
    <property type="reaction ID" value="UER00102"/>
</dbReference>
<dbReference type="GO" id="GO:0003985">
    <property type="term" value="F:acetyl-CoA C-acetyltransferase activity"/>
    <property type="evidence" value="ECO:0007669"/>
    <property type="project" value="UniProtKB-UniRule"/>
</dbReference>
<dbReference type="GO" id="GO:0004421">
    <property type="term" value="F:hydroxymethylglutaryl-CoA synthase activity"/>
    <property type="evidence" value="ECO:0007669"/>
    <property type="project" value="InterPro"/>
</dbReference>
<dbReference type="GO" id="GO:0010142">
    <property type="term" value="P:farnesyl diphosphate biosynthetic process, mevalonate pathway"/>
    <property type="evidence" value="ECO:0007669"/>
    <property type="project" value="TreeGrafter"/>
</dbReference>
<dbReference type="GO" id="GO:0019287">
    <property type="term" value="P:isopentenyl diphosphate biosynthetic process, mevalonate pathway"/>
    <property type="evidence" value="ECO:0007669"/>
    <property type="project" value="UniProtKB-UniRule"/>
</dbReference>
<dbReference type="CDD" id="cd00827">
    <property type="entry name" value="init_cond_enzymes"/>
    <property type="match status" value="1"/>
</dbReference>
<dbReference type="Gene3D" id="3.40.47.10">
    <property type="match status" value="1"/>
</dbReference>
<dbReference type="HAMAP" id="MF_01409">
    <property type="entry name" value="HMG_CoA_synth_arch"/>
    <property type="match status" value="1"/>
</dbReference>
<dbReference type="InterPro" id="IPR013747">
    <property type="entry name" value="ACP_syn_III_C"/>
</dbReference>
<dbReference type="InterPro" id="IPR004656">
    <property type="entry name" value="HMG_CoA_Synthase"/>
</dbReference>
<dbReference type="InterPro" id="IPR016039">
    <property type="entry name" value="Thiolase-like"/>
</dbReference>
<dbReference type="NCBIfam" id="TIGR00748">
    <property type="entry name" value="HMG_CoA_syn_Arc"/>
    <property type="match status" value="1"/>
</dbReference>
<dbReference type="NCBIfam" id="NF003274">
    <property type="entry name" value="PRK04262.1"/>
    <property type="match status" value="1"/>
</dbReference>
<dbReference type="PANTHER" id="PTHR43323">
    <property type="entry name" value="3-HYDROXY-3-METHYLGLUTARYL COENZYME A SYNTHASE"/>
    <property type="match status" value="1"/>
</dbReference>
<dbReference type="PANTHER" id="PTHR43323:SF2">
    <property type="entry name" value="HYDROXYMETHYLGLUTARYL-COA SYNTHASE"/>
    <property type="match status" value="1"/>
</dbReference>
<dbReference type="Pfam" id="PF08541">
    <property type="entry name" value="ACP_syn_III_C"/>
    <property type="match status" value="1"/>
</dbReference>
<dbReference type="SUPFAM" id="SSF53901">
    <property type="entry name" value="Thiolase-like"/>
    <property type="match status" value="2"/>
</dbReference>
<protein>
    <recommendedName>
        <fullName evidence="1">Hydroxymethylglutaryl-CoA synthase</fullName>
        <shortName evidence="1">HMG-CoA synthase</shortName>
        <shortName evidence="1">HMGCS</shortName>
        <ecNumber evidence="1">2.3.3.10</ecNumber>
    </recommendedName>
</protein>
<accession>A6VGF1</accession>
<organism>
    <name type="scientific">Methanococcus maripaludis (strain C7 / ATCC BAA-1331)</name>
    <dbReference type="NCBI Taxonomy" id="426368"/>
    <lineage>
        <taxon>Archaea</taxon>
        <taxon>Methanobacteriati</taxon>
        <taxon>Methanobacteriota</taxon>
        <taxon>Methanomada group</taxon>
        <taxon>Methanococci</taxon>
        <taxon>Methanococcales</taxon>
        <taxon>Methanococcaceae</taxon>
        <taxon>Methanococcus</taxon>
    </lineage>
</organism>
<evidence type="ECO:0000255" key="1">
    <source>
        <dbReference type="HAMAP-Rule" id="MF_01409"/>
    </source>
</evidence>
<gene>
    <name type="ordered locus">MmarC7_0458</name>
</gene>
<proteinExistence type="inferred from homology"/>
<sequence>MKEVGIVGYGSDLPKYRIKAEDIAGAWGKDAQAIKRGLVVNEKSVPGPDEDTATISVQAARRALSRAGINPKDIGAVYVGSESHPYAVKPTSGIVAEACGVSPDFTAADLEFACKAGTAGIQMCMGLVGSDMMEYAMAVGADTAQGAPGDALEYTAAAGGAAYIIGAKKEELIAKFNGTYSYTTDTPDFWRREHEHYPKHGGRFTGEPAYFKHVLNGAKGMMAKMDTTAKDYDYCVFHQPNGKFYISAAKQLGFTEEQYKYGLLTPYLGNTYSGAVPLGLSNILDHAKADDRIFVVSYGSGAGSDAFDITVTDRISEVVDKAITTEKLLESKKYVDYAVYLKYRGKIRM</sequence>
<comment type="function">
    <text evidence="1">Catalyzes the condensation of acetyl-CoA with acetoacetyl-CoA to form 3-hydroxy-3-methylglutaryl-CoA (HMG-CoA). Functions in the mevalonate (MVA) pathway leading to isopentenyl diphosphate (IPP), a key precursor for the biosynthesis of isoprenoid compounds that are building blocks of archaeal membrane lipids.</text>
</comment>
<comment type="catalytic activity">
    <reaction evidence="1">
        <text>acetoacetyl-CoA + acetyl-CoA + H2O = (3S)-3-hydroxy-3-methylglutaryl-CoA + CoA + H(+)</text>
        <dbReference type="Rhea" id="RHEA:10188"/>
        <dbReference type="ChEBI" id="CHEBI:15377"/>
        <dbReference type="ChEBI" id="CHEBI:15378"/>
        <dbReference type="ChEBI" id="CHEBI:43074"/>
        <dbReference type="ChEBI" id="CHEBI:57286"/>
        <dbReference type="ChEBI" id="CHEBI:57287"/>
        <dbReference type="ChEBI" id="CHEBI:57288"/>
        <dbReference type="EC" id="2.3.3.10"/>
    </reaction>
    <physiologicalReaction direction="left-to-right" evidence="1">
        <dbReference type="Rhea" id="RHEA:10189"/>
    </physiologicalReaction>
</comment>
<comment type="pathway">
    <text evidence="1">Metabolic intermediate biosynthesis; (R)-mevalonate biosynthesis; (R)-mevalonate from acetyl-CoA: step 2/3.</text>
</comment>
<comment type="subunit">
    <text evidence="1">Interacts with acetoacetyl-CoA thiolase that catalyzes the precedent step in the pathway and with a DUF35 protein. The acetoacetyl-CoA thiolase/HMG-CoA synthase complex channels the intermediate via a fused CoA-binding site, which allows for efficient coupling of the endergonic thiolase reaction with the exergonic HMGCS reaction.</text>
</comment>
<comment type="similarity">
    <text evidence="1">Belongs to the thiolase-like superfamily. Archaeal HMG-CoA synthase family.</text>
</comment>